<sequence length="510" mass="57055">MRGAYYVLTALFVVTSSDIAAESDHPLHNFNHHVITAGNAVVKALPNRSLRGSRDGRNDLANEERSISSFLANMIDEGVAKLPLVAEIIKTKPLAAKAVKQKPRAMKKKFRAAKAVEEKSRPAKAAKKTPRAAKAAKKTPPQAKVVDEILYGVEATKEMGKSEEYGVLKAATEGADQALKKHWDPSRETAVIVAPSRDISGNVILSLRKWKVGFNGMRPMVVLDKHKDNIDRVHGAFGTLCDKNMQITPVETSYLWSMLDWNIEKNFKKKHKQTLVRLAQRYVLIGLRQVKKDRKVWNQWKKLPDPLKFGVLNYLLNLHYQRWVRMYNIFRRYRPDQNGVPSTLGGNANINRALALQKHSKVRSVFPYEPFDVAWASKGRRSVLSKRSRRTFDGNTDTASLPSKQLKTRSSESSMPPLIESTTSGDDSVPTKEIKSSFDDPKSAFAPFKPGDDFVHTENSRLSFGGLSSAFVPYRRPNVHNSQSLTSPITVSSMPSLMKSTTSGDGLRPY</sequence>
<gene>
    <name evidence="5" type="primary">RXLR108</name>
</gene>
<dbReference type="GlyCosmos" id="P0CV43">
    <property type="glycosylation" value="1 site, No reported glycans"/>
</dbReference>
<dbReference type="GO" id="GO:0005576">
    <property type="term" value="C:extracellular region"/>
    <property type="evidence" value="ECO:0007669"/>
    <property type="project" value="UniProtKB-SubCell"/>
</dbReference>
<dbReference type="GO" id="GO:0042025">
    <property type="term" value="C:host cell nucleus"/>
    <property type="evidence" value="ECO:0007669"/>
    <property type="project" value="UniProtKB-SubCell"/>
</dbReference>
<name>RL108_PLAVT</name>
<organism>
    <name type="scientific">Plasmopara viticola</name>
    <name type="common">Downy mildew of grapevine</name>
    <name type="synonym">Botrytis viticola</name>
    <dbReference type="NCBI Taxonomy" id="143451"/>
    <lineage>
        <taxon>Eukaryota</taxon>
        <taxon>Sar</taxon>
        <taxon>Stramenopiles</taxon>
        <taxon>Oomycota</taxon>
        <taxon>Peronosporales</taxon>
        <taxon>Peronosporaceae</taxon>
        <taxon>Plasmopara</taxon>
    </lineage>
</organism>
<accession>P0CV43</accession>
<keyword id="KW-0325">Glycoprotein</keyword>
<keyword id="KW-1048">Host nucleus</keyword>
<keyword id="KW-0964">Secreted</keyword>
<keyword id="KW-0732">Signal</keyword>
<keyword id="KW-0843">Virulence</keyword>
<comment type="function">
    <text evidence="4">Secreted effector that completely suppresses the host cell death induced by cell death-inducing proteins.</text>
</comment>
<comment type="subcellular location">
    <subcellularLocation>
        <location evidence="4">Secreted</location>
    </subcellularLocation>
    <subcellularLocation>
        <location evidence="4">Host nucleus</location>
    </subcellularLocation>
</comment>
<comment type="domain">
    <text evidence="7">The RxLR-dEER motif acts to carry the protein into the host cell cytoplasm through binding to cell surface phosphatidylinositol-3-phosphate.</text>
</comment>
<comment type="similarity">
    <text evidence="6">Belongs to the RxLR effector family.</text>
</comment>
<protein>
    <recommendedName>
        <fullName evidence="5">Secreted RxLR effector protein 108</fullName>
    </recommendedName>
</protein>
<reference key="1">
    <citation type="journal article" date="2018" name="Front. Plant Sci.">
        <title>In planta functional analysis and subcellular localization of the oomycete pathogen Plasmopara viticola candidate RXLR effector repertoire.</title>
        <authorList>
            <person name="Liu Y."/>
            <person name="Lan X."/>
            <person name="Song S."/>
            <person name="Yin L."/>
            <person name="Dry I.B."/>
            <person name="Qu J."/>
            <person name="Xiang J."/>
            <person name="Lu J."/>
        </authorList>
    </citation>
    <scope>NUCLEOTIDE SEQUENCE [MRNA]</scope>
    <scope>DOMAIN</scope>
    <scope>FUNCTION</scope>
    <scope>SUBCELLULAR LOCATION</scope>
</reference>
<proteinExistence type="evidence at transcript level"/>
<evidence type="ECO:0000255" key="1"/>
<evidence type="ECO:0000255" key="2">
    <source>
        <dbReference type="PROSITE-ProRule" id="PRU00498"/>
    </source>
</evidence>
<evidence type="ECO:0000256" key="3">
    <source>
        <dbReference type="SAM" id="MobiDB-lite"/>
    </source>
</evidence>
<evidence type="ECO:0000269" key="4">
    <source>
    </source>
</evidence>
<evidence type="ECO:0000303" key="5">
    <source>
    </source>
</evidence>
<evidence type="ECO:0000305" key="6"/>
<evidence type="ECO:0000305" key="7">
    <source>
    </source>
</evidence>
<feature type="signal peptide" evidence="1">
    <location>
        <begin position="1"/>
        <end position="20"/>
    </location>
</feature>
<feature type="chain" id="PRO_0000447952" description="Secreted RxLR effector protein 108">
    <location>
        <begin position="21"/>
        <end position="510"/>
    </location>
</feature>
<feature type="region of interest" description="Disordered" evidence="3">
    <location>
        <begin position="111"/>
        <end position="139"/>
    </location>
</feature>
<feature type="region of interest" description="Disordered" evidence="3">
    <location>
        <begin position="386"/>
        <end position="442"/>
    </location>
</feature>
<feature type="short sequence motif" description="RxLR-dEER" evidence="7">
    <location>
        <begin position="48"/>
        <end position="65"/>
    </location>
</feature>
<feature type="compositionally biased region" description="Basic residues" evidence="3">
    <location>
        <begin position="122"/>
        <end position="137"/>
    </location>
</feature>
<feature type="compositionally biased region" description="Polar residues" evidence="3">
    <location>
        <begin position="393"/>
        <end position="405"/>
    </location>
</feature>
<feature type="compositionally biased region" description="Basic and acidic residues" evidence="3">
    <location>
        <begin position="429"/>
        <end position="442"/>
    </location>
</feature>
<feature type="glycosylation site" description="N-linked (GlcNAc...) asparagine" evidence="2">
    <location>
        <position position="47"/>
    </location>
</feature>